<evidence type="ECO:0000255" key="1">
    <source>
        <dbReference type="HAMAP-Rule" id="MF_00225"/>
    </source>
</evidence>
<feature type="chain" id="PRO_1000204312" description="Dihydroorotate dehydrogenase (quinone)">
    <location>
        <begin position="1"/>
        <end position="347"/>
    </location>
</feature>
<feature type="active site" description="Nucleophile" evidence="1">
    <location>
        <position position="174"/>
    </location>
</feature>
<feature type="binding site" evidence="1">
    <location>
        <begin position="61"/>
        <end position="65"/>
    </location>
    <ligand>
        <name>FMN</name>
        <dbReference type="ChEBI" id="CHEBI:58210"/>
    </ligand>
</feature>
<feature type="binding site" evidence="1">
    <location>
        <position position="65"/>
    </location>
    <ligand>
        <name>substrate</name>
    </ligand>
</feature>
<feature type="binding site" evidence="1">
    <location>
        <position position="85"/>
    </location>
    <ligand>
        <name>FMN</name>
        <dbReference type="ChEBI" id="CHEBI:58210"/>
    </ligand>
</feature>
<feature type="binding site" evidence="1">
    <location>
        <begin position="110"/>
        <end position="114"/>
    </location>
    <ligand>
        <name>substrate</name>
    </ligand>
</feature>
<feature type="binding site" evidence="1">
    <location>
        <position position="138"/>
    </location>
    <ligand>
        <name>FMN</name>
        <dbReference type="ChEBI" id="CHEBI:58210"/>
    </ligand>
</feature>
<feature type="binding site" evidence="1">
    <location>
        <position position="171"/>
    </location>
    <ligand>
        <name>FMN</name>
        <dbReference type="ChEBI" id="CHEBI:58210"/>
    </ligand>
</feature>
<feature type="binding site" evidence="1">
    <location>
        <position position="171"/>
    </location>
    <ligand>
        <name>substrate</name>
    </ligand>
</feature>
<feature type="binding site" evidence="1">
    <location>
        <position position="176"/>
    </location>
    <ligand>
        <name>substrate</name>
    </ligand>
</feature>
<feature type="binding site" evidence="1">
    <location>
        <position position="216"/>
    </location>
    <ligand>
        <name>FMN</name>
        <dbReference type="ChEBI" id="CHEBI:58210"/>
    </ligand>
</feature>
<feature type="binding site" evidence="1">
    <location>
        <position position="244"/>
    </location>
    <ligand>
        <name>FMN</name>
        <dbReference type="ChEBI" id="CHEBI:58210"/>
    </ligand>
</feature>
<feature type="binding site" evidence="1">
    <location>
        <begin position="245"/>
        <end position="246"/>
    </location>
    <ligand>
        <name>substrate</name>
    </ligand>
</feature>
<feature type="binding site" evidence="1">
    <location>
        <position position="267"/>
    </location>
    <ligand>
        <name>FMN</name>
        <dbReference type="ChEBI" id="CHEBI:58210"/>
    </ligand>
</feature>
<feature type="binding site" evidence="1">
    <location>
        <position position="296"/>
    </location>
    <ligand>
        <name>FMN</name>
        <dbReference type="ChEBI" id="CHEBI:58210"/>
    </ligand>
</feature>
<feature type="binding site" evidence="1">
    <location>
        <begin position="317"/>
        <end position="318"/>
    </location>
    <ligand>
        <name>FMN</name>
        <dbReference type="ChEBI" id="CHEBI:58210"/>
    </ligand>
</feature>
<gene>
    <name evidence="1" type="primary">pyrD</name>
    <name type="ordered locus">Avin_18900</name>
</gene>
<name>PYRD_AZOVD</name>
<keyword id="KW-1003">Cell membrane</keyword>
<keyword id="KW-0285">Flavoprotein</keyword>
<keyword id="KW-0288">FMN</keyword>
<keyword id="KW-0472">Membrane</keyword>
<keyword id="KW-0560">Oxidoreductase</keyword>
<keyword id="KW-0665">Pyrimidine biosynthesis</keyword>
<proteinExistence type="inferred from homology"/>
<reference key="1">
    <citation type="journal article" date="2009" name="J. Bacteriol.">
        <title>Genome sequence of Azotobacter vinelandii, an obligate aerobe specialized to support diverse anaerobic metabolic processes.</title>
        <authorList>
            <person name="Setubal J.C."/>
            <person name="Dos Santos P."/>
            <person name="Goldman B.S."/>
            <person name="Ertesvaag H."/>
            <person name="Espin G."/>
            <person name="Rubio L.M."/>
            <person name="Valla S."/>
            <person name="Almeida N.F."/>
            <person name="Balasubramanian D."/>
            <person name="Cromes L."/>
            <person name="Curatti L."/>
            <person name="Du Z."/>
            <person name="Godsy E."/>
            <person name="Goodner B."/>
            <person name="Hellner-Burris K."/>
            <person name="Hernandez J.A."/>
            <person name="Houmiel K."/>
            <person name="Imperial J."/>
            <person name="Kennedy C."/>
            <person name="Larson T.J."/>
            <person name="Latreille P."/>
            <person name="Ligon L.S."/>
            <person name="Lu J."/>
            <person name="Maerk M."/>
            <person name="Miller N.M."/>
            <person name="Norton S."/>
            <person name="O'Carroll I.P."/>
            <person name="Paulsen I."/>
            <person name="Raulfs E.C."/>
            <person name="Roemer R."/>
            <person name="Rosser J."/>
            <person name="Segura D."/>
            <person name="Slater S."/>
            <person name="Stricklin S.L."/>
            <person name="Studholme D.J."/>
            <person name="Sun J."/>
            <person name="Viana C.J."/>
            <person name="Wallin E."/>
            <person name="Wang B."/>
            <person name="Wheeler C."/>
            <person name="Zhu H."/>
            <person name="Dean D.R."/>
            <person name="Dixon R."/>
            <person name="Wood D."/>
        </authorList>
    </citation>
    <scope>NUCLEOTIDE SEQUENCE [LARGE SCALE GENOMIC DNA]</scope>
    <source>
        <strain>DJ / ATCC BAA-1303</strain>
    </source>
</reference>
<comment type="function">
    <text evidence="1">Catalyzes the conversion of dihydroorotate to orotate with quinone as electron acceptor.</text>
</comment>
<comment type="catalytic activity">
    <reaction evidence="1">
        <text>(S)-dihydroorotate + a quinone = orotate + a quinol</text>
        <dbReference type="Rhea" id="RHEA:30187"/>
        <dbReference type="ChEBI" id="CHEBI:24646"/>
        <dbReference type="ChEBI" id="CHEBI:30839"/>
        <dbReference type="ChEBI" id="CHEBI:30864"/>
        <dbReference type="ChEBI" id="CHEBI:132124"/>
        <dbReference type="EC" id="1.3.5.2"/>
    </reaction>
</comment>
<comment type="cofactor">
    <cofactor evidence="1">
        <name>FMN</name>
        <dbReference type="ChEBI" id="CHEBI:58210"/>
    </cofactor>
    <text evidence="1">Binds 1 FMN per subunit.</text>
</comment>
<comment type="pathway">
    <text evidence="1">Pyrimidine metabolism; UMP biosynthesis via de novo pathway; orotate from (S)-dihydroorotate (quinone route): step 1/1.</text>
</comment>
<comment type="subunit">
    <text evidence="1">Monomer.</text>
</comment>
<comment type="subcellular location">
    <subcellularLocation>
        <location evidence="1">Cell membrane</location>
        <topology evidence="1">Peripheral membrane protein</topology>
    </subcellularLocation>
</comment>
<comment type="similarity">
    <text evidence="1">Belongs to the dihydroorotate dehydrogenase family. Type 2 subfamily.</text>
</comment>
<protein>
    <recommendedName>
        <fullName evidence="1">Dihydroorotate dehydrogenase (quinone)</fullName>
        <ecNumber evidence="1">1.3.5.2</ecNumber>
    </recommendedName>
    <alternativeName>
        <fullName evidence="1">DHOdehase</fullName>
        <shortName evidence="1">DHOD</shortName>
        <shortName evidence="1">DHODase</shortName>
    </alternativeName>
    <alternativeName>
        <fullName evidence="1">Dihydroorotate oxidase</fullName>
    </alternativeName>
</protein>
<accession>C1DDY1</accession>
<organism>
    <name type="scientific">Azotobacter vinelandii (strain DJ / ATCC BAA-1303)</name>
    <dbReference type="NCBI Taxonomy" id="322710"/>
    <lineage>
        <taxon>Bacteria</taxon>
        <taxon>Pseudomonadati</taxon>
        <taxon>Pseudomonadota</taxon>
        <taxon>Gammaproteobacteria</taxon>
        <taxon>Pseudomonadales</taxon>
        <taxon>Pseudomonadaceae</taxon>
        <taxon>Azotobacter</taxon>
    </lineage>
</organism>
<sequence>MYTLARQLLFKLSPETAHELTIDLLGAGGRLGLNGLLCHRPASLPVRVMGLDFPNPVGLAAGLDKNGDAIDGLAQLGFGFVEIGTVTPRPQPGNPRPRLFRLPQAEAIVNRMGFNNLGVDHLLARVQAARYSGVLGINIGKNFDTPVERAVDDYLICLDKVYPHASYVTVNVSSPNTPGLRSLQFGDSLRQLLEALRQRQEELAGRHGRRVPLAIKIAPDMSDEETAQVARALLDTGMDAVIATNTTLGREGVEGLAHAGEAGGLSGAPVREKSTHAVRVLAGELGGRLPIVAVGGITEGRHAAEKIAAGASLVQIYTGFVYKGPALIREAVEAIAALRGERPVGTH</sequence>
<dbReference type="EC" id="1.3.5.2" evidence="1"/>
<dbReference type="EMBL" id="CP001157">
    <property type="protein sequence ID" value="ACO78102.1"/>
    <property type="molecule type" value="Genomic_DNA"/>
</dbReference>
<dbReference type="RefSeq" id="WP_012700511.1">
    <property type="nucleotide sequence ID" value="NC_012560.1"/>
</dbReference>
<dbReference type="SMR" id="C1DDY1"/>
<dbReference type="STRING" id="322710.Avin_18900"/>
<dbReference type="EnsemblBacteria" id="ACO78102">
    <property type="protein sequence ID" value="ACO78102"/>
    <property type="gene ID" value="Avin_18900"/>
</dbReference>
<dbReference type="GeneID" id="88185131"/>
<dbReference type="KEGG" id="avn:Avin_18900"/>
<dbReference type="eggNOG" id="COG0167">
    <property type="taxonomic scope" value="Bacteria"/>
</dbReference>
<dbReference type="HOGENOM" id="CLU_013640_2_0_6"/>
<dbReference type="OrthoDB" id="9802377at2"/>
<dbReference type="UniPathway" id="UPA00070">
    <property type="reaction ID" value="UER00946"/>
</dbReference>
<dbReference type="Proteomes" id="UP000002424">
    <property type="component" value="Chromosome"/>
</dbReference>
<dbReference type="GO" id="GO:0005737">
    <property type="term" value="C:cytoplasm"/>
    <property type="evidence" value="ECO:0007669"/>
    <property type="project" value="InterPro"/>
</dbReference>
<dbReference type="GO" id="GO:0005886">
    <property type="term" value="C:plasma membrane"/>
    <property type="evidence" value="ECO:0007669"/>
    <property type="project" value="UniProtKB-SubCell"/>
</dbReference>
<dbReference type="GO" id="GO:0106430">
    <property type="term" value="F:dihydroorotate dehydrogenase (quinone) activity"/>
    <property type="evidence" value="ECO:0007669"/>
    <property type="project" value="UniProtKB-EC"/>
</dbReference>
<dbReference type="GO" id="GO:0006207">
    <property type="term" value="P:'de novo' pyrimidine nucleobase biosynthetic process"/>
    <property type="evidence" value="ECO:0007669"/>
    <property type="project" value="InterPro"/>
</dbReference>
<dbReference type="GO" id="GO:0044205">
    <property type="term" value="P:'de novo' UMP biosynthetic process"/>
    <property type="evidence" value="ECO:0007669"/>
    <property type="project" value="UniProtKB-UniRule"/>
</dbReference>
<dbReference type="CDD" id="cd04738">
    <property type="entry name" value="DHOD_2_like"/>
    <property type="match status" value="1"/>
</dbReference>
<dbReference type="FunFam" id="3.20.20.70:FF:000028">
    <property type="entry name" value="Dihydroorotate dehydrogenase (quinone)"/>
    <property type="match status" value="1"/>
</dbReference>
<dbReference type="Gene3D" id="3.20.20.70">
    <property type="entry name" value="Aldolase class I"/>
    <property type="match status" value="1"/>
</dbReference>
<dbReference type="HAMAP" id="MF_00225">
    <property type="entry name" value="DHO_dh_type2"/>
    <property type="match status" value="1"/>
</dbReference>
<dbReference type="InterPro" id="IPR013785">
    <property type="entry name" value="Aldolase_TIM"/>
</dbReference>
<dbReference type="InterPro" id="IPR050074">
    <property type="entry name" value="DHO_dehydrogenase"/>
</dbReference>
<dbReference type="InterPro" id="IPR012135">
    <property type="entry name" value="Dihydroorotate_DH_1_2"/>
</dbReference>
<dbReference type="InterPro" id="IPR005719">
    <property type="entry name" value="Dihydroorotate_DH_2"/>
</dbReference>
<dbReference type="InterPro" id="IPR005720">
    <property type="entry name" value="Dihydroorotate_DH_cat"/>
</dbReference>
<dbReference type="InterPro" id="IPR001295">
    <property type="entry name" value="Dihydroorotate_DH_CS"/>
</dbReference>
<dbReference type="NCBIfam" id="NF003644">
    <property type="entry name" value="PRK05286.1-1"/>
    <property type="match status" value="1"/>
</dbReference>
<dbReference type="NCBIfam" id="NF003645">
    <property type="entry name" value="PRK05286.1-2"/>
    <property type="match status" value="1"/>
</dbReference>
<dbReference type="NCBIfam" id="NF003646">
    <property type="entry name" value="PRK05286.1-4"/>
    <property type="match status" value="1"/>
</dbReference>
<dbReference type="NCBIfam" id="NF003652">
    <property type="entry name" value="PRK05286.2-5"/>
    <property type="match status" value="1"/>
</dbReference>
<dbReference type="NCBIfam" id="TIGR01036">
    <property type="entry name" value="pyrD_sub2"/>
    <property type="match status" value="1"/>
</dbReference>
<dbReference type="PANTHER" id="PTHR48109:SF4">
    <property type="entry name" value="DIHYDROOROTATE DEHYDROGENASE (QUINONE), MITOCHONDRIAL"/>
    <property type="match status" value="1"/>
</dbReference>
<dbReference type="PANTHER" id="PTHR48109">
    <property type="entry name" value="DIHYDROOROTATE DEHYDROGENASE (QUINONE), MITOCHONDRIAL-RELATED"/>
    <property type="match status" value="1"/>
</dbReference>
<dbReference type="Pfam" id="PF01180">
    <property type="entry name" value="DHO_dh"/>
    <property type="match status" value="1"/>
</dbReference>
<dbReference type="PIRSF" id="PIRSF000164">
    <property type="entry name" value="DHO_oxidase"/>
    <property type="match status" value="1"/>
</dbReference>
<dbReference type="SUPFAM" id="SSF51395">
    <property type="entry name" value="FMN-linked oxidoreductases"/>
    <property type="match status" value="1"/>
</dbReference>
<dbReference type="PROSITE" id="PS00911">
    <property type="entry name" value="DHODEHASE_1"/>
    <property type="match status" value="1"/>
</dbReference>